<organism>
    <name type="scientific">Saccharomyces cerevisiae (strain ATCC 204508 / S288c)</name>
    <name type="common">Baker's yeast</name>
    <dbReference type="NCBI Taxonomy" id="559292"/>
    <lineage>
        <taxon>Eukaryota</taxon>
        <taxon>Fungi</taxon>
        <taxon>Dikarya</taxon>
        <taxon>Ascomycota</taxon>
        <taxon>Saccharomycotina</taxon>
        <taxon>Saccharomycetes</taxon>
        <taxon>Saccharomycetales</taxon>
        <taxon>Saccharomycetaceae</taxon>
        <taxon>Saccharomyces</taxon>
    </lineage>
</organism>
<sequence length="1060" mass="118280">MRIFSGDNKVVDSLASNPGLMSPSNFGGDFGSRLKVNVTSKKKLNDSSPTSPMESSPVSPELVPILTLLNAHTHRRYHEGVFLILQDLNNNGTHAARKWKDVYGVLLGTQLALWDAKELAEFTDPSCPVSEKKLKEVASKPTYINLTDATLRTLDNSDNIVMECGKNLTNALVVSTTLKNRYFLQFGNKESFNAWNSAIRLCLYECSSLQEAYTGAFISSRGAKLGDIRILLTNRKYDYKDWVSVRFGAGMPWKRCYAVISQSSSKKKGHFGEINLYENDKKVKKNHAMATIVEAKALYAVYPSSPKLIDSSTIIKVVGSVKFEKKESAQEKDVFIMPEKHQAVPSYDTIIRFLIPAMDTFKLYGRPEKLLSSKNDPHSLLFGLPVLPHIYYLEVEDLLPLTNSVSSLHWSNNEWKEHISDILQRKIAQGYCGCNSTSNITSPLPSPFLGSADLFERADGVLSPKLSYGSKSSSNNSSKNSLPKRERVKLSSSSEQDLNNSDSPSIKRKSPPLVISESPHKVHTPTDASFRTRVTEGSPYAKQRHPKPFASSVNDSPSDRAKSRTVPYNNNDRKATTPEKFERGETSCGKNVDESLEKVRNMKLEIPESNFDKFMTDKNLLSVDSKCSNEKKLSVESDLSAIYEKYSNGPFGHTEGLNGSSDETYLRFQRASVHSESNYNSRKSFTPSDFSNGNEEEHAVLQELNSLTQRINELGMESINSNSDSDRINGSYSQVDFGNNNDEDDMNLFDPDFMAQDQLRAEERDYNKDDRTPLAKVPAAFQSTGLGITPDDDIERQYITEHRSRHEVPKRSPEKPSNPLEIGNPYAKPGTRLNTTHTHSKTDRSITPQRGQPVPSGQQISSYVQPANINSPNKMYGANNSAMGSPRNPKTRAPPGPYNQGWNNRPSPSNIYQRPHPSDTQPQAYHLPGNPYSTGNRPNMQAQYHPQQVPMPILQQPNRPYQPYAMNTHMGSPGGYAGAAPPFQPANVNYNTRPQQPWPTPNSPSAHYRPPPNLNQPQNGSAGYYRPPAPQLQNSQARPQKKDGFSQFMPSATTKNPYAQ</sequence>
<comment type="function">
    <text>Acts as a component of the CCR4-NOT core complex, which in the nucleus seems to be a general transcription factor, and in the cytoplasm the major mRNA deadenylase involved in mRNA turnover. The NOT protein subcomplex negatively regulates the basal and activated transcription of many genes. Preferentially affects TC-type TATA element-dependent transcription. Could directly or indirectly inhibit component(s) of the general transcription machinery.</text>
</comment>
<comment type="subunit">
    <text evidence="3">Subunit of the 1.0 MDa CCR4-NOT core complex that contains CCR4, CAF1, CAF120, NOT1, NOT2, NOT3, NOT4, NOT5, CAF40 and CAF130. In the complex interacts with NOT1. The core complex probably is part of a less characterized 1.9 MDa CCR4-NOT complex.</text>
</comment>
<comment type="subcellular location">
    <subcellularLocation>
        <location evidence="4">Cytoplasm</location>
    </subcellularLocation>
    <subcellularLocation>
        <location evidence="4">Nucleus</location>
    </subcellularLocation>
    <subcellularLocation>
        <location evidence="4">Bud neck</location>
    </subcellularLocation>
</comment>
<comment type="miscellaneous">
    <text evidence="5">Present with 1380 molecules/cell in log phase SD medium.</text>
</comment>
<comment type="similarity">
    <text evidence="6">Belongs to the CAF120 family.</text>
</comment>
<keyword id="KW-0010">Activator</keyword>
<keyword id="KW-0963">Cytoplasm</keyword>
<keyword id="KW-0539">Nucleus</keyword>
<keyword id="KW-0597">Phosphoprotein</keyword>
<keyword id="KW-1185">Reference proteome</keyword>
<keyword id="KW-0678">Repressor</keyword>
<keyword id="KW-0804">Transcription</keyword>
<keyword id="KW-0805">Transcription regulation</keyword>
<gene>
    <name type="primary">CAF120</name>
    <name type="ordered locus">YNL278W</name>
    <name type="ORF">N0610</name>
</gene>
<reference key="1">
    <citation type="journal article" date="1997" name="Nature">
        <title>The nucleotide sequence of Saccharomyces cerevisiae chromosome XIV and its evolutionary implications.</title>
        <authorList>
            <person name="Philippsen P."/>
            <person name="Kleine K."/>
            <person name="Poehlmann R."/>
            <person name="Duesterhoeft A."/>
            <person name="Hamberg K."/>
            <person name="Hegemann J.H."/>
            <person name="Obermaier B."/>
            <person name="Urrestarazu L.A."/>
            <person name="Aert R."/>
            <person name="Albermann K."/>
            <person name="Altmann R."/>
            <person name="Andre B."/>
            <person name="Baladron V."/>
            <person name="Ballesta J.P.G."/>
            <person name="Becam A.-M."/>
            <person name="Beinhauer J.D."/>
            <person name="Boskovic J."/>
            <person name="Buitrago M.J."/>
            <person name="Bussereau F."/>
            <person name="Coster F."/>
            <person name="Crouzet M."/>
            <person name="D'Angelo M."/>
            <person name="Dal Pero F."/>
            <person name="De Antoni A."/>
            <person name="del Rey F."/>
            <person name="Doignon F."/>
            <person name="Domdey H."/>
            <person name="Dubois E."/>
            <person name="Fiedler T.A."/>
            <person name="Fleig U."/>
            <person name="Floeth M."/>
            <person name="Fritz C."/>
            <person name="Gaillardin C."/>
            <person name="Garcia-Cantalejo J.M."/>
            <person name="Glansdorff N."/>
            <person name="Goffeau A."/>
            <person name="Gueldener U."/>
            <person name="Herbert C.J."/>
            <person name="Heumann K."/>
            <person name="Heuss-Neitzel D."/>
            <person name="Hilbert H."/>
            <person name="Hinni K."/>
            <person name="Iraqui Houssaini I."/>
            <person name="Jacquet M."/>
            <person name="Jimenez A."/>
            <person name="Jonniaux J.-L."/>
            <person name="Karpfinger-Hartl L."/>
            <person name="Lanfranchi G."/>
            <person name="Lepingle A."/>
            <person name="Levesque H."/>
            <person name="Lyck R."/>
            <person name="Maftahi M."/>
            <person name="Mallet L."/>
            <person name="Maurer C.T.C."/>
            <person name="Messenguy F."/>
            <person name="Mewes H.-W."/>
            <person name="Moestl D."/>
            <person name="Nasr F."/>
            <person name="Nicaud J.-M."/>
            <person name="Niedenthal R.K."/>
            <person name="Pandolfo D."/>
            <person name="Pierard A."/>
            <person name="Piravandi E."/>
            <person name="Planta R.J."/>
            <person name="Pohl T.M."/>
            <person name="Purnelle B."/>
            <person name="Rebischung C."/>
            <person name="Remacha M.A."/>
            <person name="Revuelta J.L."/>
            <person name="Rinke M."/>
            <person name="Saiz J.E."/>
            <person name="Sartorello F."/>
            <person name="Scherens B."/>
            <person name="Sen-Gupta M."/>
            <person name="Soler-Mira A."/>
            <person name="Urbanus J.H.M."/>
            <person name="Valle G."/>
            <person name="Van Dyck L."/>
            <person name="Verhasselt P."/>
            <person name="Vierendeels F."/>
            <person name="Vissers S."/>
            <person name="Voet M."/>
            <person name="Volckaert G."/>
            <person name="Wach A."/>
            <person name="Wambutt R."/>
            <person name="Wedler H."/>
            <person name="Zollner A."/>
            <person name="Hani J."/>
        </authorList>
    </citation>
    <scope>NUCLEOTIDE SEQUENCE [LARGE SCALE GENOMIC DNA]</scope>
    <source>
        <strain>ATCC 204508 / S288c</strain>
    </source>
</reference>
<reference key="2">
    <citation type="journal article" date="2014" name="G3 (Bethesda)">
        <title>The reference genome sequence of Saccharomyces cerevisiae: Then and now.</title>
        <authorList>
            <person name="Engel S.R."/>
            <person name="Dietrich F.S."/>
            <person name="Fisk D.G."/>
            <person name="Binkley G."/>
            <person name="Balakrishnan R."/>
            <person name="Costanzo M.C."/>
            <person name="Dwight S.S."/>
            <person name="Hitz B.C."/>
            <person name="Karra K."/>
            <person name="Nash R.S."/>
            <person name="Weng S."/>
            <person name="Wong E.D."/>
            <person name="Lloyd P."/>
            <person name="Skrzypek M.S."/>
            <person name="Miyasato S.R."/>
            <person name="Simison M."/>
            <person name="Cherry J.M."/>
        </authorList>
    </citation>
    <scope>GENOME REANNOTATION</scope>
    <source>
        <strain>ATCC 204508 / S288c</strain>
    </source>
</reference>
<reference key="3">
    <citation type="journal article" date="2001" name="J. Mol. Biol.">
        <title>Purification and characterization of the 1.0 MDa CCR4-NOT complex identifies two novel components of the complex.</title>
        <authorList>
            <person name="Chen J."/>
            <person name="Rappsilber J."/>
            <person name="Chiang Y.C."/>
            <person name="Russell P."/>
            <person name="Mann M."/>
            <person name="Denis C.L."/>
        </authorList>
    </citation>
    <scope>IDENTIFICATION IN THE CCR4-NOT CORE COMPLEX</scope>
</reference>
<reference key="4">
    <citation type="journal article" date="2003" name="Nature">
        <title>Global analysis of protein localization in budding yeast.</title>
        <authorList>
            <person name="Huh W.-K."/>
            <person name="Falvo J.V."/>
            <person name="Gerke L.C."/>
            <person name="Carroll A.S."/>
            <person name="Howson R.W."/>
            <person name="Weissman J.S."/>
            <person name="O'Shea E.K."/>
        </authorList>
    </citation>
    <scope>SUBCELLULAR LOCATION [LARGE SCALE ANALYSIS]</scope>
</reference>
<reference key="5">
    <citation type="journal article" date="2003" name="Nature">
        <title>Global analysis of protein expression in yeast.</title>
        <authorList>
            <person name="Ghaemmaghami S."/>
            <person name="Huh W.-K."/>
            <person name="Bower K."/>
            <person name="Howson R.W."/>
            <person name="Belle A."/>
            <person name="Dephoure N."/>
            <person name="O'Shea E.K."/>
            <person name="Weissman J.S."/>
        </authorList>
    </citation>
    <scope>LEVEL OF PROTEIN EXPRESSION [LARGE SCALE ANALYSIS]</scope>
</reference>
<reference key="6">
    <citation type="journal article" date="2007" name="Proc. Natl. Acad. Sci. U.S.A.">
        <title>Analysis of phosphorylation sites on proteins from Saccharomyces cerevisiae by electron transfer dissociation (ETD) mass spectrometry.</title>
        <authorList>
            <person name="Chi A."/>
            <person name="Huttenhower C."/>
            <person name="Geer L.Y."/>
            <person name="Coon J.J."/>
            <person name="Syka J.E.P."/>
            <person name="Bai D.L."/>
            <person name="Shabanowitz J."/>
            <person name="Burke D.J."/>
            <person name="Troyanskaya O.G."/>
            <person name="Hunt D.F."/>
        </authorList>
    </citation>
    <scope>PHOSPHORYLATION [LARGE SCALE ANALYSIS] AT SER-510; SER-518; SER-538 AND SER-556</scope>
    <scope>IDENTIFICATION BY MASS SPECTROMETRY [LARGE SCALE ANALYSIS]</scope>
</reference>
<reference key="7">
    <citation type="journal article" date="2008" name="Mol. Cell. Proteomics">
        <title>A multidimensional chromatography technology for in-depth phosphoproteome analysis.</title>
        <authorList>
            <person name="Albuquerque C.P."/>
            <person name="Smolka M.B."/>
            <person name="Payne S.H."/>
            <person name="Bafna V."/>
            <person name="Eng J."/>
            <person name="Zhou H."/>
        </authorList>
    </citation>
    <scope>IDENTIFICATION BY MASS SPECTROMETRY [LARGE SCALE ANALYSIS]</scope>
</reference>
<reference key="8">
    <citation type="journal article" date="2009" name="Science">
        <title>Global analysis of Cdk1 substrate phosphorylation sites provides insights into evolution.</title>
        <authorList>
            <person name="Holt L.J."/>
            <person name="Tuch B.B."/>
            <person name="Villen J."/>
            <person name="Johnson A.D."/>
            <person name="Gygi S.P."/>
            <person name="Morgan D.O."/>
        </authorList>
    </citation>
    <scope>PHOSPHORYLATION [LARGE SCALE ANALYSIS] AT SER-491; SER-556; SER-871 AND SER-885</scope>
    <scope>IDENTIFICATION BY MASS SPECTROMETRY [LARGE SCALE ANALYSIS]</scope>
</reference>
<dbReference type="EMBL" id="Z71554">
    <property type="protein sequence ID" value="CAA96190.1"/>
    <property type="molecule type" value="Genomic_DNA"/>
</dbReference>
<dbReference type="EMBL" id="BK006947">
    <property type="protein sequence ID" value="DAA10282.1"/>
    <property type="molecule type" value="Genomic_DNA"/>
</dbReference>
<dbReference type="PIR" id="S63252">
    <property type="entry name" value="S63252"/>
</dbReference>
<dbReference type="RefSeq" id="NP_014121.1">
    <property type="nucleotide sequence ID" value="NM_001183116.1"/>
</dbReference>
<dbReference type="BioGRID" id="35563">
    <property type="interactions" value="127"/>
</dbReference>
<dbReference type="DIP" id="DIP-6489N"/>
<dbReference type="FunCoup" id="P53836">
    <property type="interactions" value="225"/>
</dbReference>
<dbReference type="IntAct" id="P53836">
    <property type="interactions" value="13"/>
</dbReference>
<dbReference type="STRING" id="4932.YNL278W"/>
<dbReference type="GlyGen" id="P53836">
    <property type="glycosylation" value="3 sites, 1 O-linked glycan (2 sites)"/>
</dbReference>
<dbReference type="iPTMnet" id="P53836"/>
<dbReference type="PaxDb" id="4932-YNL278W"/>
<dbReference type="PeptideAtlas" id="P53836"/>
<dbReference type="EnsemblFungi" id="YNL278W_mRNA">
    <property type="protein sequence ID" value="YNL278W"/>
    <property type="gene ID" value="YNL278W"/>
</dbReference>
<dbReference type="GeneID" id="855443"/>
<dbReference type="KEGG" id="sce:YNL278W"/>
<dbReference type="AGR" id="SGD:S000005222"/>
<dbReference type="SGD" id="S000005222">
    <property type="gene designation" value="CAF120"/>
</dbReference>
<dbReference type="VEuPathDB" id="FungiDB:YNL278W"/>
<dbReference type="eggNOG" id="ENOG502QPV9">
    <property type="taxonomic scope" value="Eukaryota"/>
</dbReference>
<dbReference type="GeneTree" id="ENSGT00940000176380"/>
<dbReference type="HOGENOM" id="CLU_006977_1_0_1"/>
<dbReference type="InParanoid" id="P53836"/>
<dbReference type="OMA" id="EWKEHIS"/>
<dbReference type="OrthoDB" id="5563754at2759"/>
<dbReference type="BioCyc" id="YEAST:G3O-33270-MONOMER"/>
<dbReference type="BioGRID-ORCS" id="855443">
    <property type="hits" value="0 hits in 10 CRISPR screens"/>
</dbReference>
<dbReference type="PRO" id="PR:P53836"/>
<dbReference type="Proteomes" id="UP000002311">
    <property type="component" value="Chromosome XIV"/>
</dbReference>
<dbReference type="RNAct" id="P53836">
    <property type="molecule type" value="protein"/>
</dbReference>
<dbReference type="GO" id="GO:0005935">
    <property type="term" value="C:cellular bud neck"/>
    <property type="evidence" value="ECO:0000314"/>
    <property type="project" value="SGD"/>
</dbReference>
<dbReference type="GO" id="GO:0005737">
    <property type="term" value="C:cytoplasm"/>
    <property type="evidence" value="ECO:0007669"/>
    <property type="project" value="UniProtKB-SubCell"/>
</dbReference>
<dbReference type="GO" id="GO:0005634">
    <property type="term" value="C:nucleus"/>
    <property type="evidence" value="ECO:0007669"/>
    <property type="project" value="UniProtKB-SubCell"/>
</dbReference>
<dbReference type="GO" id="GO:0004672">
    <property type="term" value="F:protein kinase activity"/>
    <property type="evidence" value="ECO:0000318"/>
    <property type="project" value="GO_Central"/>
</dbReference>
<dbReference type="GO" id="GO:0007165">
    <property type="term" value="P:signal transduction"/>
    <property type="evidence" value="ECO:0000318"/>
    <property type="project" value="GO_Central"/>
</dbReference>
<dbReference type="Gene3D" id="2.30.29.30">
    <property type="entry name" value="Pleckstrin-homology domain (PH domain)/Phosphotyrosine-binding domain (PTB)"/>
    <property type="match status" value="1"/>
</dbReference>
<dbReference type="InterPro" id="IPR011993">
    <property type="entry name" value="PH-like_dom_sf"/>
</dbReference>
<dbReference type="InterPro" id="IPR001849">
    <property type="entry name" value="PH_domain"/>
</dbReference>
<dbReference type="Pfam" id="PF00169">
    <property type="entry name" value="PH"/>
    <property type="match status" value="1"/>
</dbReference>
<dbReference type="Pfam" id="PF25381">
    <property type="entry name" value="PH_26"/>
    <property type="match status" value="1"/>
</dbReference>
<dbReference type="SMART" id="SM00233">
    <property type="entry name" value="PH"/>
    <property type="match status" value="1"/>
</dbReference>
<dbReference type="SUPFAM" id="SSF50729">
    <property type="entry name" value="PH domain-like"/>
    <property type="match status" value="1"/>
</dbReference>
<dbReference type="PROSITE" id="PS50003">
    <property type="entry name" value="PH_DOMAIN"/>
    <property type="match status" value="1"/>
</dbReference>
<feature type="chain" id="PRO_0000203378" description="CCR4-NOT transcriptional complex subunit CAF120">
    <location>
        <begin position="1"/>
        <end position="1060"/>
    </location>
</feature>
<feature type="domain" description="PH" evidence="1">
    <location>
        <begin position="75"/>
        <end position="204"/>
    </location>
</feature>
<feature type="region of interest" description="Disordered" evidence="2">
    <location>
        <begin position="465"/>
        <end position="589"/>
    </location>
</feature>
<feature type="region of interest" description="Disordered" evidence="2">
    <location>
        <begin position="801"/>
        <end position="942"/>
    </location>
</feature>
<feature type="region of interest" description="Disordered" evidence="2">
    <location>
        <begin position="955"/>
        <end position="1060"/>
    </location>
</feature>
<feature type="compositionally biased region" description="Low complexity" evidence="2">
    <location>
        <begin position="465"/>
        <end position="481"/>
    </location>
</feature>
<feature type="compositionally biased region" description="Polar residues" evidence="2">
    <location>
        <begin position="490"/>
        <end position="504"/>
    </location>
</feature>
<feature type="compositionally biased region" description="Basic and acidic residues" evidence="2">
    <location>
        <begin position="571"/>
        <end position="589"/>
    </location>
</feature>
<feature type="compositionally biased region" description="Basic and acidic residues" evidence="2">
    <location>
        <begin position="801"/>
        <end position="814"/>
    </location>
</feature>
<feature type="compositionally biased region" description="Polar residues" evidence="2">
    <location>
        <begin position="845"/>
        <end position="883"/>
    </location>
</feature>
<feature type="compositionally biased region" description="Polar residues" evidence="2">
    <location>
        <begin position="900"/>
        <end position="923"/>
    </location>
</feature>
<feature type="compositionally biased region" description="Polar residues" evidence="2">
    <location>
        <begin position="931"/>
        <end position="942"/>
    </location>
</feature>
<feature type="compositionally biased region" description="Polar residues" evidence="2">
    <location>
        <begin position="1048"/>
        <end position="1060"/>
    </location>
</feature>
<feature type="modified residue" description="Phosphoserine" evidence="8">
    <location>
        <position position="491"/>
    </location>
</feature>
<feature type="modified residue" description="Phosphoserine" evidence="7">
    <location>
        <position position="510"/>
    </location>
</feature>
<feature type="modified residue" description="Phosphoserine" evidence="7">
    <location>
        <position position="518"/>
    </location>
</feature>
<feature type="modified residue" description="Phosphoserine" evidence="7">
    <location>
        <position position="538"/>
    </location>
</feature>
<feature type="modified residue" description="Phosphoserine" evidence="7 8">
    <location>
        <position position="556"/>
    </location>
</feature>
<feature type="modified residue" description="Phosphoserine" evidence="8">
    <location>
        <position position="871"/>
    </location>
</feature>
<feature type="modified residue" description="Phosphoserine" evidence="8">
    <location>
        <position position="885"/>
    </location>
</feature>
<accession>P53836</accession>
<accession>D6W0R6</accession>
<protein>
    <recommendedName>
        <fullName>CCR4-NOT transcriptional complex subunit CAF120</fullName>
    </recommendedName>
    <alternativeName>
        <fullName>120 kDa CCR4-associated factor</fullName>
    </alternativeName>
</protein>
<evidence type="ECO:0000255" key="1">
    <source>
        <dbReference type="PROSITE-ProRule" id="PRU00145"/>
    </source>
</evidence>
<evidence type="ECO:0000256" key="2">
    <source>
        <dbReference type="SAM" id="MobiDB-lite"/>
    </source>
</evidence>
<evidence type="ECO:0000269" key="3">
    <source>
    </source>
</evidence>
<evidence type="ECO:0000269" key="4">
    <source>
    </source>
</evidence>
<evidence type="ECO:0000269" key="5">
    <source>
    </source>
</evidence>
<evidence type="ECO:0000305" key="6"/>
<evidence type="ECO:0007744" key="7">
    <source>
    </source>
</evidence>
<evidence type="ECO:0007744" key="8">
    <source>
    </source>
</evidence>
<name>CA120_YEAST</name>
<proteinExistence type="evidence at protein level"/>